<protein>
    <recommendedName>
        <fullName>Uncharacterized HTH-type transcriptional regulator YdeS</fullName>
    </recommendedName>
</protein>
<accession>P96676</accession>
<accession>Q797H4</accession>
<organism>
    <name type="scientific">Bacillus subtilis (strain 168)</name>
    <dbReference type="NCBI Taxonomy" id="224308"/>
    <lineage>
        <taxon>Bacteria</taxon>
        <taxon>Bacillati</taxon>
        <taxon>Bacillota</taxon>
        <taxon>Bacilli</taxon>
        <taxon>Bacillales</taxon>
        <taxon>Bacillaceae</taxon>
        <taxon>Bacillus</taxon>
    </lineage>
</organism>
<gene>
    <name type="primary">ydeS</name>
    <name type="ordered locus">BSU05320</name>
</gene>
<reference key="1">
    <citation type="submission" date="1997-03" db="EMBL/GenBank/DDBJ databases">
        <title>A 148 kbp sequence of the region between 35 and 47 degree of the Bacillus subtilis genome.</title>
        <authorList>
            <person name="Kasahara Y."/>
            <person name="Nakai S."/>
            <person name="Lee S."/>
            <person name="Sadaie Y."/>
            <person name="Ogasawara N."/>
        </authorList>
    </citation>
    <scope>NUCLEOTIDE SEQUENCE [GENOMIC DNA]</scope>
    <source>
        <strain>168</strain>
    </source>
</reference>
<reference key="2">
    <citation type="journal article" date="1997" name="Nature">
        <title>The complete genome sequence of the Gram-positive bacterium Bacillus subtilis.</title>
        <authorList>
            <person name="Kunst F."/>
            <person name="Ogasawara N."/>
            <person name="Moszer I."/>
            <person name="Albertini A.M."/>
            <person name="Alloni G."/>
            <person name="Azevedo V."/>
            <person name="Bertero M.G."/>
            <person name="Bessieres P."/>
            <person name="Bolotin A."/>
            <person name="Borchert S."/>
            <person name="Borriss R."/>
            <person name="Boursier L."/>
            <person name="Brans A."/>
            <person name="Braun M."/>
            <person name="Brignell S.C."/>
            <person name="Bron S."/>
            <person name="Brouillet S."/>
            <person name="Bruschi C.V."/>
            <person name="Caldwell B."/>
            <person name="Capuano V."/>
            <person name="Carter N.M."/>
            <person name="Choi S.-K."/>
            <person name="Codani J.-J."/>
            <person name="Connerton I.F."/>
            <person name="Cummings N.J."/>
            <person name="Daniel R.A."/>
            <person name="Denizot F."/>
            <person name="Devine K.M."/>
            <person name="Duesterhoeft A."/>
            <person name="Ehrlich S.D."/>
            <person name="Emmerson P.T."/>
            <person name="Entian K.-D."/>
            <person name="Errington J."/>
            <person name="Fabret C."/>
            <person name="Ferrari E."/>
            <person name="Foulger D."/>
            <person name="Fritz C."/>
            <person name="Fujita M."/>
            <person name="Fujita Y."/>
            <person name="Fuma S."/>
            <person name="Galizzi A."/>
            <person name="Galleron N."/>
            <person name="Ghim S.-Y."/>
            <person name="Glaser P."/>
            <person name="Goffeau A."/>
            <person name="Golightly E.J."/>
            <person name="Grandi G."/>
            <person name="Guiseppi G."/>
            <person name="Guy B.J."/>
            <person name="Haga K."/>
            <person name="Haiech J."/>
            <person name="Harwood C.R."/>
            <person name="Henaut A."/>
            <person name="Hilbert H."/>
            <person name="Holsappel S."/>
            <person name="Hosono S."/>
            <person name="Hullo M.-F."/>
            <person name="Itaya M."/>
            <person name="Jones L.-M."/>
            <person name="Joris B."/>
            <person name="Karamata D."/>
            <person name="Kasahara Y."/>
            <person name="Klaerr-Blanchard M."/>
            <person name="Klein C."/>
            <person name="Kobayashi Y."/>
            <person name="Koetter P."/>
            <person name="Koningstein G."/>
            <person name="Krogh S."/>
            <person name="Kumano M."/>
            <person name="Kurita K."/>
            <person name="Lapidus A."/>
            <person name="Lardinois S."/>
            <person name="Lauber J."/>
            <person name="Lazarevic V."/>
            <person name="Lee S.-M."/>
            <person name="Levine A."/>
            <person name="Liu H."/>
            <person name="Masuda S."/>
            <person name="Mauel C."/>
            <person name="Medigue C."/>
            <person name="Medina N."/>
            <person name="Mellado R.P."/>
            <person name="Mizuno M."/>
            <person name="Moestl D."/>
            <person name="Nakai S."/>
            <person name="Noback M."/>
            <person name="Noone D."/>
            <person name="O'Reilly M."/>
            <person name="Ogawa K."/>
            <person name="Ogiwara A."/>
            <person name="Oudega B."/>
            <person name="Park S.-H."/>
            <person name="Parro V."/>
            <person name="Pohl T.M."/>
            <person name="Portetelle D."/>
            <person name="Porwollik S."/>
            <person name="Prescott A.M."/>
            <person name="Presecan E."/>
            <person name="Pujic P."/>
            <person name="Purnelle B."/>
            <person name="Rapoport G."/>
            <person name="Rey M."/>
            <person name="Reynolds S."/>
            <person name="Rieger M."/>
            <person name="Rivolta C."/>
            <person name="Rocha E."/>
            <person name="Roche B."/>
            <person name="Rose M."/>
            <person name="Sadaie Y."/>
            <person name="Sato T."/>
            <person name="Scanlan E."/>
            <person name="Schleich S."/>
            <person name="Schroeter R."/>
            <person name="Scoffone F."/>
            <person name="Sekiguchi J."/>
            <person name="Sekowska A."/>
            <person name="Seror S.J."/>
            <person name="Serror P."/>
            <person name="Shin B.-S."/>
            <person name="Soldo B."/>
            <person name="Sorokin A."/>
            <person name="Tacconi E."/>
            <person name="Takagi T."/>
            <person name="Takahashi H."/>
            <person name="Takemaru K."/>
            <person name="Takeuchi M."/>
            <person name="Tamakoshi A."/>
            <person name="Tanaka T."/>
            <person name="Terpstra P."/>
            <person name="Tognoni A."/>
            <person name="Tosato V."/>
            <person name="Uchiyama S."/>
            <person name="Vandenbol M."/>
            <person name="Vannier F."/>
            <person name="Vassarotti A."/>
            <person name="Viari A."/>
            <person name="Wambutt R."/>
            <person name="Wedler E."/>
            <person name="Wedler H."/>
            <person name="Weitzenegger T."/>
            <person name="Winters P."/>
            <person name="Wipat A."/>
            <person name="Yamamoto H."/>
            <person name="Yamane K."/>
            <person name="Yasumoto K."/>
            <person name="Yata K."/>
            <person name="Yoshida K."/>
            <person name="Yoshikawa H.-F."/>
            <person name="Zumstein E."/>
            <person name="Yoshikawa H."/>
            <person name="Danchin A."/>
        </authorList>
    </citation>
    <scope>NUCLEOTIDE SEQUENCE [LARGE SCALE GENOMIC DNA]</scope>
    <source>
        <strain>168</strain>
    </source>
</reference>
<reference key="3">
    <citation type="journal article" date="2005" name="Microbiol. Mol. Biol. Rev.">
        <title>The TetR family of transcriptional repressors.</title>
        <authorList>
            <person name="Ramos J.L."/>
            <person name="Martinez-Bueno M."/>
            <person name="Molina-Henares A.J."/>
            <person name="Teran W."/>
            <person name="Watanabe K."/>
            <person name="Zhang X."/>
            <person name="Gallegos M.T."/>
            <person name="Brennan R."/>
            <person name="Tobes R."/>
        </authorList>
    </citation>
    <scope>REVIEW</scope>
    <scope>GENE FAMILY</scope>
</reference>
<sequence>MQSKRGRPRDEGTHKAILSAAYDLLLEKGFDAVTVDKIAERAKVSKATIYKWWSNKAAVIMDSFLSTATDRLPVPDTGSSVQDIVTHATNLARFLTSREGTVIKELIGAGQLDEKLAEEYRTRFFQPRRLQAKGLLEKGIQKGELRENLDIEVSIDLIYGPIFYRLLITGDEVNDSYVRDLVMNAFKGVQATSATESM</sequence>
<evidence type="ECO:0000255" key="1">
    <source>
        <dbReference type="PROSITE-ProRule" id="PRU00335"/>
    </source>
</evidence>
<proteinExistence type="predicted"/>
<name>YDES_BACSU</name>
<dbReference type="EMBL" id="AB001488">
    <property type="protein sequence ID" value="BAA19366.1"/>
    <property type="molecule type" value="Genomic_DNA"/>
</dbReference>
<dbReference type="EMBL" id="AL009126">
    <property type="protein sequence ID" value="CAB12339.1"/>
    <property type="molecule type" value="Genomic_DNA"/>
</dbReference>
<dbReference type="PIR" id="E69779">
    <property type="entry name" value="E69779"/>
</dbReference>
<dbReference type="RefSeq" id="NP_388413.1">
    <property type="nucleotide sequence ID" value="NC_000964.3"/>
</dbReference>
<dbReference type="RefSeq" id="WP_003244147.1">
    <property type="nucleotide sequence ID" value="NZ_OZ025638.1"/>
</dbReference>
<dbReference type="SMR" id="P96676"/>
<dbReference type="FunCoup" id="P96676">
    <property type="interactions" value="108"/>
</dbReference>
<dbReference type="STRING" id="224308.BSU05320"/>
<dbReference type="PaxDb" id="224308-BSU05320"/>
<dbReference type="EnsemblBacteria" id="CAB12339">
    <property type="protein sequence ID" value="CAB12339"/>
    <property type="gene ID" value="BSU_05320"/>
</dbReference>
<dbReference type="GeneID" id="938083"/>
<dbReference type="KEGG" id="bsu:BSU05320"/>
<dbReference type="PATRIC" id="fig|224308.43.peg.553"/>
<dbReference type="eggNOG" id="COG1309">
    <property type="taxonomic scope" value="Bacteria"/>
</dbReference>
<dbReference type="InParanoid" id="P96676"/>
<dbReference type="OrthoDB" id="9796019at2"/>
<dbReference type="PhylomeDB" id="P96676"/>
<dbReference type="BioCyc" id="BSUB:BSU05320-MONOMER"/>
<dbReference type="Proteomes" id="UP000001570">
    <property type="component" value="Chromosome"/>
</dbReference>
<dbReference type="GO" id="GO:0003700">
    <property type="term" value="F:DNA-binding transcription factor activity"/>
    <property type="evidence" value="ECO:0000318"/>
    <property type="project" value="GO_Central"/>
</dbReference>
<dbReference type="GO" id="GO:0000976">
    <property type="term" value="F:transcription cis-regulatory region binding"/>
    <property type="evidence" value="ECO:0000318"/>
    <property type="project" value="GO_Central"/>
</dbReference>
<dbReference type="GO" id="GO:0006355">
    <property type="term" value="P:regulation of DNA-templated transcription"/>
    <property type="evidence" value="ECO:0000318"/>
    <property type="project" value="GO_Central"/>
</dbReference>
<dbReference type="Gene3D" id="1.10.10.60">
    <property type="entry name" value="Homeodomain-like"/>
    <property type="match status" value="1"/>
</dbReference>
<dbReference type="Gene3D" id="1.10.357.10">
    <property type="entry name" value="Tetracycline Repressor, domain 2"/>
    <property type="match status" value="1"/>
</dbReference>
<dbReference type="InterPro" id="IPR009057">
    <property type="entry name" value="Homeodomain-like_sf"/>
</dbReference>
<dbReference type="InterPro" id="IPR050109">
    <property type="entry name" value="HTH-type_TetR-like_transc_reg"/>
</dbReference>
<dbReference type="InterPro" id="IPR001647">
    <property type="entry name" value="HTH_TetR"/>
</dbReference>
<dbReference type="InterPro" id="IPR036271">
    <property type="entry name" value="Tet_transcr_reg_TetR-rel_C_sf"/>
</dbReference>
<dbReference type="InterPro" id="IPR011075">
    <property type="entry name" value="TetR_C"/>
</dbReference>
<dbReference type="PANTHER" id="PTHR30055">
    <property type="entry name" value="HTH-TYPE TRANSCRIPTIONAL REGULATOR RUTR"/>
    <property type="match status" value="1"/>
</dbReference>
<dbReference type="PANTHER" id="PTHR30055:SF148">
    <property type="entry name" value="TETR-FAMILY TRANSCRIPTIONAL REGULATOR"/>
    <property type="match status" value="1"/>
</dbReference>
<dbReference type="Pfam" id="PF16859">
    <property type="entry name" value="TetR_C_11"/>
    <property type="match status" value="1"/>
</dbReference>
<dbReference type="Pfam" id="PF00440">
    <property type="entry name" value="TetR_N"/>
    <property type="match status" value="1"/>
</dbReference>
<dbReference type="PRINTS" id="PR00455">
    <property type="entry name" value="HTHTETR"/>
</dbReference>
<dbReference type="SUPFAM" id="SSF46689">
    <property type="entry name" value="Homeodomain-like"/>
    <property type="match status" value="1"/>
</dbReference>
<dbReference type="SUPFAM" id="SSF48498">
    <property type="entry name" value="Tetracyclin repressor-like, C-terminal domain"/>
    <property type="match status" value="1"/>
</dbReference>
<dbReference type="PROSITE" id="PS50977">
    <property type="entry name" value="HTH_TETR_2"/>
    <property type="match status" value="1"/>
</dbReference>
<keyword id="KW-0238">DNA-binding</keyword>
<keyword id="KW-1185">Reference proteome</keyword>
<keyword id="KW-0678">Repressor</keyword>
<keyword id="KW-0804">Transcription</keyword>
<keyword id="KW-0805">Transcription regulation</keyword>
<feature type="chain" id="PRO_0000360708" description="Uncharacterized HTH-type transcriptional regulator YdeS">
    <location>
        <begin position="1"/>
        <end position="198"/>
    </location>
</feature>
<feature type="domain" description="HTH tetR-type" evidence="1">
    <location>
        <begin position="11"/>
        <end position="71"/>
    </location>
</feature>
<feature type="DNA-binding region" description="H-T-H motif" evidence="1">
    <location>
        <begin position="34"/>
        <end position="53"/>
    </location>
</feature>